<dbReference type="EC" id="2.4.1.-" evidence="1 2"/>
<dbReference type="EMBL" id="EU821531">
    <property type="protein sequence ID" value="ACF35267.1"/>
    <property type="molecule type" value="Genomic_DNA"/>
</dbReference>
<dbReference type="RefSeq" id="WP_014713999.1">
    <property type="nucleotide sequence ID" value="NZ_JYPA01000014.1"/>
</dbReference>
<dbReference type="PDB" id="3QKW">
    <property type="method" value="X-ray"/>
    <property type="resolution" value="2.29 A"/>
    <property type="chains" value="A/B/C/D=1-330"/>
</dbReference>
<dbReference type="PDB" id="3RHZ">
    <property type="method" value="X-ray"/>
    <property type="resolution" value="1.90 A"/>
    <property type="chains" value="A/B=1-329"/>
</dbReference>
<dbReference type="PDBsum" id="3QKW"/>
<dbReference type="PDBsum" id="3RHZ"/>
<dbReference type="SMR" id="B5A7L9"/>
<dbReference type="PATRIC" id="fig|1305.10.peg.1021"/>
<dbReference type="UniPathway" id="UPA00378"/>
<dbReference type="EvolutionaryTrace" id="B5A7L9"/>
<dbReference type="GO" id="GO:0000166">
    <property type="term" value="F:nucleotide binding"/>
    <property type="evidence" value="ECO:0007669"/>
    <property type="project" value="UniProtKB-KW"/>
</dbReference>
<dbReference type="GO" id="GO:0035251">
    <property type="term" value="F:UDP-glucosyltransferase activity"/>
    <property type="evidence" value="ECO:0000314"/>
    <property type="project" value="UniProtKB"/>
</dbReference>
<dbReference type="GO" id="GO:0006486">
    <property type="term" value="P:protein glycosylation"/>
    <property type="evidence" value="ECO:0007669"/>
    <property type="project" value="UniProtKB-UniRule"/>
</dbReference>
<dbReference type="FunFam" id="3.40.50.2000:FF:000277">
    <property type="entry name" value="Glucosyltransferase 3"/>
    <property type="match status" value="1"/>
</dbReference>
<dbReference type="FunFam" id="3.40.50.2000:FF:000296">
    <property type="entry name" value="Glucosyltransferase 3"/>
    <property type="match status" value="1"/>
</dbReference>
<dbReference type="Gene3D" id="3.40.50.2000">
    <property type="entry name" value="Glycogen Phosphorylase B"/>
    <property type="match status" value="2"/>
</dbReference>
<dbReference type="HAMAP" id="MF_00841">
    <property type="entry name" value="Gtf3"/>
    <property type="match status" value="1"/>
</dbReference>
<dbReference type="InterPro" id="IPR043676">
    <property type="entry name" value="Gtf3"/>
</dbReference>
<dbReference type="PIRSF" id="PIRSF007023">
    <property type="entry name" value="UDP-Galf_transf"/>
    <property type="match status" value="1"/>
</dbReference>
<dbReference type="SUPFAM" id="SSF53756">
    <property type="entry name" value="UDP-Glycosyltransferase/glycogen phosphorylase"/>
    <property type="match status" value="1"/>
</dbReference>
<evidence type="ECO:0000255" key="1">
    <source>
        <dbReference type="HAMAP-Rule" id="MF_00841"/>
    </source>
</evidence>
<evidence type="ECO:0000269" key="2">
    <source>
    </source>
</evidence>
<evidence type="ECO:0000269" key="3">
    <source>
    </source>
</evidence>
<evidence type="ECO:0000269" key="4">
    <source>
    </source>
</evidence>
<evidence type="ECO:0000303" key="5">
    <source>
    </source>
</evidence>
<evidence type="ECO:0000303" key="6">
    <source>
    </source>
</evidence>
<evidence type="ECO:0007744" key="7">
    <source>
        <dbReference type="PDB" id="3QKW"/>
    </source>
</evidence>
<evidence type="ECO:0007744" key="8">
    <source>
        <dbReference type="PDB" id="3RHZ"/>
    </source>
</evidence>
<evidence type="ECO:0007829" key="9">
    <source>
        <dbReference type="PDB" id="3RHZ"/>
    </source>
</evidence>
<comment type="function">
    <text evidence="2 3 4">Required for polymorphic O-glycosylation of the serine-rich repeat protein Fap1. Catalyzes the second step in glycosylation of the serine-rich repeat protein in this bacteria. Transfers glucose from UDP-glucose to the terminal GlcNAc moiety of 3-O-(N-acetyl-alpha-D-glucosaminyl)-L-seryl-[protein] which results from the first glycosylation step of Fap1; does not use other sugar nucleotides as substrates.</text>
</comment>
<comment type="cofactor">
    <text evidence="3">In vitro glycosyltransferase activity is metal-independent.</text>
</comment>
<comment type="pathway">
    <text evidence="1 2 4">Protein modification; protein glycosylation.</text>
</comment>
<comment type="subunit">
    <text evidence="1 3">Homotetramer; a dimer of dimers.</text>
</comment>
<comment type="domain">
    <text evidence="3 4">Dimerizes via the C-terminus; dimerization is required for tetramer formation (PubMed:21653318). Binds protein substrate via an exposed loop in the N-terminus (PubMed:25404702).</text>
</comment>
<comment type="disruption phenotype">
    <text evidence="2 3">The Fap1 protein no longer reacts with a glycan-specific antibody, and migrates as a much larger than wild-type protein. Fap1 is not able to undergo the second glycosylation step. Has defects in biofilm mass accumulation, the biofilm that forms is not as thick as wild-type (PubMed:20164186). Deletion of this gene can be complemented by the ortholog from S.agalactiae strain COH1, but not from S.pneumoniae strain TIGR4 or from S.sanguinis strain SK36 (PubMed:21653318).</text>
</comment>
<comment type="similarity">
    <text evidence="1">Belongs to the Gtf3 glucosyltransferase family.</text>
</comment>
<name>GTF3_STRPA</name>
<feature type="chain" id="PRO_0000447236" description="Glucosyltransferase 3">
    <location>
        <begin position="1"/>
        <end position="330"/>
    </location>
</feature>
<feature type="region of interest" description="Substrate protein-binding loop" evidence="4">
    <location>
        <begin position="106"/>
        <end position="111"/>
    </location>
</feature>
<feature type="binding site" evidence="1 3 7 8">
    <location>
        <position position="16"/>
    </location>
    <ligand>
        <name>UDP</name>
        <dbReference type="ChEBI" id="CHEBI:58223"/>
    </ligand>
</feature>
<feature type="binding site" evidence="1 3 7 8">
    <location>
        <position position="179"/>
    </location>
    <ligand>
        <name>UDP</name>
        <dbReference type="ChEBI" id="CHEBI:58223"/>
    </ligand>
</feature>
<feature type="binding site" evidence="3 7 8">
    <location>
        <begin position="211"/>
        <end position="214"/>
    </location>
    <ligand>
        <name>UDP</name>
        <dbReference type="ChEBI" id="CHEBI:58223"/>
    </ligand>
</feature>
<feature type="binding site" evidence="1 3 7 8">
    <location>
        <begin position="244"/>
        <end position="249"/>
    </location>
    <ligand>
        <name>UDP</name>
        <dbReference type="ChEBI" id="CHEBI:58223"/>
    </ligand>
</feature>
<feature type="mutagenesis site" description="Loss of binding to Fap1-GlcNAc substrate, loss of glycosyltransferase activity." evidence="4">
    <location>
        <begin position="106"/>
        <end position="111"/>
    </location>
</feature>
<feature type="mutagenesis site" description="Complete loss of glycosyltransferase activity, does not restore Fap1 glycosylation in vivo." evidence="3">
    <original>R</original>
    <variation>A</variation>
    <location>
        <position position="179"/>
    </location>
</feature>
<feature type="mutagenesis site" description="25% glycosyltransferase activity, partially restores Fap1 glycosylation in vivo." evidence="3">
    <original>Y</original>
    <variation>A</variation>
    <location>
        <position position="211"/>
    </location>
</feature>
<feature type="mutagenesis site" description="Wild-type glycosyltransferase activity, fully restores Fap1 glycosylation in vivo." evidence="3">
    <original>D</original>
    <variation>A</variation>
    <location>
        <position position="214"/>
    </location>
</feature>
<feature type="mutagenesis site" description="Complete loss of glycosyltransferase activity, the protein forms tetramers, does not restore Fap1 glycosylation in vivo." evidence="3">
    <original>K</original>
    <variation>A</variation>
    <location>
        <position position="246"/>
    </location>
</feature>
<feature type="mutagenesis site" description="Wild-type glycosyltransferase activity." evidence="3">
    <original>S</original>
    <variation>A</variation>
    <location>
        <position position="249"/>
    </location>
</feature>
<feature type="mutagenesis site" description="Complete loss of glycosyltransferase activity." evidence="3">
    <location>
        <begin position="314"/>
        <end position="330"/>
    </location>
</feature>
<feature type="mutagenesis site" description="25% glycosyltransferase activity, the protein dimerizes but does not tetramerize." evidence="3">
    <original>F</original>
    <variation>A</variation>
    <location>
        <position position="314"/>
    </location>
</feature>
<feature type="mutagenesis site" description="Complete loss of glycosyltransferase activity, the protein does not dimerize." evidence="3">
    <original>F</original>
    <variation>A</variation>
    <location>
        <position position="315"/>
    </location>
</feature>
<feature type="mutagenesis site" description="25% glycosyltransferase activity, the protein dimerizes but does not tetramerize, partially restores Fap1 glycosylation in vivo." evidence="3">
    <original>R</original>
    <variation>A</variation>
    <location>
        <position position="318"/>
    </location>
</feature>
<feature type="mutagenesis site" description="Complete loss of glycosyltransferase activity, the protein does not dimerize, does not restore Fap1 glycosylation in vivo." evidence="3">
    <original>L</original>
    <variation>A</variation>
    <location>
        <position position="320"/>
    </location>
</feature>
<feature type="strand" evidence="9">
    <location>
        <begin position="3"/>
        <end position="11"/>
    </location>
</feature>
<feature type="helix" evidence="9">
    <location>
        <begin position="16"/>
        <end position="30"/>
    </location>
</feature>
<feature type="strand" evidence="9">
    <location>
        <begin position="34"/>
        <end position="39"/>
    </location>
</feature>
<feature type="helix" evidence="9">
    <location>
        <begin position="43"/>
        <end position="45"/>
    </location>
</feature>
<feature type="helix" evidence="9">
    <location>
        <begin position="48"/>
        <end position="58"/>
    </location>
</feature>
<feature type="turn" evidence="9">
    <location>
        <begin position="59"/>
        <end position="61"/>
    </location>
</feature>
<feature type="strand" evidence="9">
    <location>
        <begin position="67"/>
        <end position="72"/>
    </location>
</feature>
<feature type="helix" evidence="9">
    <location>
        <begin position="78"/>
        <end position="88"/>
    </location>
</feature>
<feature type="strand" evidence="9">
    <location>
        <begin position="94"/>
        <end position="100"/>
    </location>
</feature>
<feature type="helix" evidence="9">
    <location>
        <begin position="103"/>
        <end position="106"/>
    </location>
</feature>
<feature type="helix" evidence="9">
    <location>
        <begin position="108"/>
        <end position="113"/>
    </location>
</feature>
<feature type="helix" evidence="9">
    <location>
        <begin position="114"/>
        <end position="121"/>
    </location>
</feature>
<feature type="strand" evidence="9">
    <location>
        <begin position="125"/>
        <end position="130"/>
    </location>
</feature>
<feature type="helix" evidence="9">
    <location>
        <begin position="132"/>
        <end position="140"/>
    </location>
</feature>
<feature type="strand" evidence="9">
    <location>
        <begin position="146"/>
        <end position="150"/>
    </location>
</feature>
<feature type="strand" evidence="9">
    <location>
        <begin position="166"/>
        <end position="173"/>
    </location>
</feature>
<feature type="turn" evidence="9">
    <location>
        <begin position="177"/>
        <end position="179"/>
    </location>
</feature>
<feature type="helix" evidence="9">
    <location>
        <begin position="181"/>
        <end position="185"/>
    </location>
</feature>
<feature type="strand" evidence="9">
    <location>
        <begin position="192"/>
        <end position="197"/>
    </location>
</feature>
<feature type="strand" evidence="9">
    <location>
        <begin position="206"/>
        <end position="210"/>
    </location>
</feature>
<feature type="helix" evidence="9">
    <location>
        <begin position="214"/>
        <end position="222"/>
    </location>
</feature>
<feature type="strand" evidence="9">
    <location>
        <begin position="224"/>
        <end position="228"/>
    </location>
</feature>
<feature type="helix" evidence="9">
    <location>
        <begin position="233"/>
        <end position="235"/>
    </location>
</feature>
<feature type="helix" evidence="9">
    <location>
        <begin position="236"/>
        <end position="239"/>
    </location>
</feature>
<feature type="helix" evidence="9">
    <location>
        <begin position="245"/>
        <end position="253"/>
    </location>
</feature>
<feature type="strand" evidence="9">
    <location>
        <begin position="257"/>
        <end position="260"/>
    </location>
</feature>
<feature type="turn" evidence="9">
    <location>
        <begin position="264"/>
        <end position="266"/>
    </location>
</feature>
<feature type="helix" evidence="9">
    <location>
        <begin position="267"/>
        <end position="272"/>
    </location>
</feature>
<feature type="strand" evidence="9">
    <location>
        <begin position="275"/>
        <end position="280"/>
    </location>
</feature>
<feature type="helix" evidence="9">
    <location>
        <begin position="281"/>
        <end position="290"/>
    </location>
</feature>
<feature type="helix" evidence="9">
    <location>
        <begin position="293"/>
        <end position="306"/>
    </location>
</feature>
<feature type="helix" evidence="9">
    <location>
        <begin position="308"/>
        <end position="311"/>
    </location>
</feature>
<feature type="helix" evidence="9">
    <location>
        <begin position="314"/>
        <end position="328"/>
    </location>
</feature>
<sequence>MRVYITNINGQSIQSTAQLCQNTVTDVAVSLGYRELGIYCYQIHTDSESELSKRLDGIVAGLRHGDVVIFQTPTWNTTEFDEKLMNKLKLYDIKIVLFIHDVVPLMFSGNFYLMDRTIAYYNKADVVVAPSQKMIDKLRDFGMNVSKTVVQGMWDHPTQAPMFPAGLKREIHFPGNPERFSFVKEWKYDIPLKVYTWQNVELPQNVHKINYRPDEQLLMEMSQGGFGLVWMDDKDKEYQSLYCSYKLGSFLAAGIPVIVQEGIANQELIENNGLGWIVKDVEEAIMKVKNVNEDEYIELVKNVRSFNPILRKGFFTRRLLTESVFQAICD</sequence>
<gene>
    <name evidence="1 6" type="primary">gtf3</name>
    <name evidence="5" type="synonym">nss</name>
</gene>
<accession>B5A7L9</accession>
<proteinExistence type="evidence at protein level"/>
<reference key="1">
    <citation type="journal article" date="2007" name="Infect. Immun.">
        <title>The glycan moieties and the N-terminal polypeptide backbone of a fimbria-associated adhesin, Fap1, play distinct roles in the biofilm development of Streptococcus parasanguinis.</title>
        <authorList>
            <person name="Wu H."/>
            <person name="Zeng M."/>
            <person name="Fives-Taylor P."/>
        </authorList>
    </citation>
    <scope>NUCLEOTIDE SEQUENCE [GENOMIC DNA]</scope>
    <source>
        <strain>FW213</strain>
    </source>
</reference>
<reference key="2">
    <citation type="journal article" date="2010" name="J. Biol. Chem.">
        <title>A novel glucosyltransferase is required for glycosylation of a serine-rich adhesin and biofilm formation by Streptococcus parasanguinis.</title>
        <authorList>
            <person name="Zhou M."/>
            <person name="Zhu F."/>
            <person name="Dong S."/>
            <person name="Pritchard D.G."/>
            <person name="Wu H."/>
        </authorList>
    </citation>
    <scope>FUNCTION</scope>
    <scope>PATHWAY</scope>
    <scope>DOMAIN</scope>
    <scope>DISRUPTION PHENOTYPE</scope>
    <source>
        <strain>FW213</strain>
    </source>
</reference>
<reference key="3">
    <citation type="journal article" date="2015" name="J. Bacteriol.">
        <title>A conserved domain is crucial for acceptor substrate binding in a family of glucosyltransferases.</title>
        <authorList>
            <person name="Zhu F."/>
            <person name="Zhang H."/>
            <person name="Wu H."/>
        </authorList>
    </citation>
    <scope>FUNCTION</scope>
    <scope>PATHWAY</scope>
    <scope>MUTAGENESIS OF 106-MET--PHE-111</scope>
    <source>
        <strain>FW213</strain>
    </source>
</reference>
<reference evidence="7 8" key="4">
    <citation type="journal article" date="2011" name="J. Biol. Chem.">
        <title>Structural and functional analysis of a new subfamily of glycosyltransferases required for glycosylation of serine-rich streptococcal adhesins.</title>
        <authorList>
            <person name="Zhu F."/>
            <person name="Erlandsen H."/>
            <person name="Ding L."/>
            <person name="Li J."/>
            <person name="Huang Y."/>
            <person name="Zhou M."/>
            <person name="Liang X."/>
            <person name="Ma J."/>
            <person name="Wu H."/>
        </authorList>
    </citation>
    <scope>X-RAY CRYSTALLOGRAPHY (1.90 ANGSTROMS) OF 1-329 IN COMPLEX WITH UDP PRODUCT</scope>
    <scope>FUNCTION</scope>
    <scope>COFACTOR</scope>
    <scope>PATHWAY</scope>
    <scope>SUBUNIT</scope>
    <scope>DOMAIN</scope>
    <scope>DISRUPTION PHENOTYPE</scope>
    <scope>MUTAGENESIS OF ARG-179; TYR-211; ASP-214; LYS-246; SER-249; 314-PHE--ASP-330; PHE-314; PHE-315; ARG-318 AND LEU-320</scope>
    <source>
        <strain>FW213</strain>
    </source>
</reference>
<organism>
    <name type="scientific">Streptococcus parasanguinis</name>
    <dbReference type="NCBI Taxonomy" id="1318"/>
    <lineage>
        <taxon>Bacteria</taxon>
        <taxon>Bacillati</taxon>
        <taxon>Bacillota</taxon>
        <taxon>Bacilli</taxon>
        <taxon>Lactobacillales</taxon>
        <taxon>Streptococcaceae</taxon>
        <taxon>Streptococcus</taxon>
    </lineage>
</organism>
<protein>
    <recommendedName>
        <fullName evidence="1 6">Glucosyltransferase 3</fullName>
        <ecNumber evidence="1 2">2.4.1.-</ecNumber>
    </recommendedName>
</protein>
<keyword id="KW-0002">3D-structure</keyword>
<keyword id="KW-0328">Glycosyltransferase</keyword>
<keyword id="KW-0547">Nucleotide-binding</keyword>
<keyword id="KW-0808">Transferase</keyword>